<name>FLUC_NEIMF</name>
<sequence>MLSNIIPLSIGAALGATARWLLNLAVPAAMSPATGNLFANWTGALLIGIFAETINHPQWKLLLITGFLGSLTTLSGFSLETVTLLQSNRPASALANIFLHTAGSLLLTWLGLKIGAAVK</sequence>
<evidence type="ECO:0000255" key="1">
    <source>
        <dbReference type="HAMAP-Rule" id="MF_00454"/>
    </source>
</evidence>
<feature type="chain" id="PRO_1000026401" description="Fluoride-specific ion channel FluC">
    <location>
        <begin position="1"/>
        <end position="119"/>
    </location>
</feature>
<feature type="transmembrane region" description="Helical" evidence="1">
    <location>
        <begin position="5"/>
        <end position="25"/>
    </location>
</feature>
<feature type="transmembrane region" description="Helical" evidence="1">
    <location>
        <begin position="34"/>
        <end position="54"/>
    </location>
</feature>
<feature type="transmembrane region" description="Helical" evidence="1">
    <location>
        <begin position="59"/>
        <end position="79"/>
    </location>
</feature>
<feature type="transmembrane region" description="Helical" evidence="1">
    <location>
        <begin position="97"/>
        <end position="117"/>
    </location>
</feature>
<feature type="binding site" evidence="1">
    <location>
        <position position="69"/>
    </location>
    <ligand>
        <name>Na(+)</name>
        <dbReference type="ChEBI" id="CHEBI:29101"/>
        <note>structural</note>
    </ligand>
</feature>
<feature type="binding site" evidence="1">
    <location>
        <position position="72"/>
    </location>
    <ligand>
        <name>Na(+)</name>
        <dbReference type="ChEBI" id="CHEBI:29101"/>
        <note>structural</note>
    </ligand>
</feature>
<gene>
    <name evidence="1" type="primary">fluC</name>
    <name evidence="1" type="synonym">crcB</name>
    <name type="ordered locus">NMC1029</name>
</gene>
<protein>
    <recommendedName>
        <fullName evidence="1">Fluoride-specific ion channel FluC</fullName>
    </recommendedName>
</protein>
<organism>
    <name type="scientific">Neisseria meningitidis serogroup C / serotype 2a (strain ATCC 700532 / DSM 15464 / FAM18)</name>
    <dbReference type="NCBI Taxonomy" id="272831"/>
    <lineage>
        <taxon>Bacteria</taxon>
        <taxon>Pseudomonadati</taxon>
        <taxon>Pseudomonadota</taxon>
        <taxon>Betaproteobacteria</taxon>
        <taxon>Neisseriales</taxon>
        <taxon>Neisseriaceae</taxon>
        <taxon>Neisseria</taxon>
    </lineage>
</organism>
<comment type="function">
    <text evidence="1">Fluoride-specific ion channel. Important for reducing fluoride concentration in the cell, thus reducing its toxicity.</text>
</comment>
<comment type="catalytic activity">
    <reaction evidence="1">
        <text>fluoride(in) = fluoride(out)</text>
        <dbReference type="Rhea" id="RHEA:76159"/>
        <dbReference type="ChEBI" id="CHEBI:17051"/>
    </reaction>
    <physiologicalReaction direction="left-to-right" evidence="1">
        <dbReference type="Rhea" id="RHEA:76160"/>
    </physiologicalReaction>
</comment>
<comment type="activity regulation">
    <text evidence="1">Na(+) is not transported, but it plays an essential structural role and its presence is essential for fluoride channel function.</text>
</comment>
<comment type="subcellular location">
    <subcellularLocation>
        <location evidence="1">Cell inner membrane</location>
        <topology evidence="1">Multi-pass membrane protein</topology>
    </subcellularLocation>
</comment>
<comment type="similarity">
    <text evidence="1">Belongs to the fluoride channel Fluc/FEX (TC 1.A.43) family.</text>
</comment>
<keyword id="KW-0997">Cell inner membrane</keyword>
<keyword id="KW-1003">Cell membrane</keyword>
<keyword id="KW-0407">Ion channel</keyword>
<keyword id="KW-0406">Ion transport</keyword>
<keyword id="KW-0472">Membrane</keyword>
<keyword id="KW-0479">Metal-binding</keyword>
<keyword id="KW-0915">Sodium</keyword>
<keyword id="KW-0812">Transmembrane</keyword>
<keyword id="KW-1133">Transmembrane helix</keyword>
<keyword id="KW-0813">Transport</keyword>
<dbReference type="EMBL" id="AM421808">
    <property type="protein sequence ID" value="CAM10291.1"/>
    <property type="molecule type" value="Genomic_DNA"/>
</dbReference>
<dbReference type="RefSeq" id="WP_002217274.1">
    <property type="nucleotide sequence ID" value="NC_008767.1"/>
</dbReference>
<dbReference type="SMR" id="A1KTV1"/>
<dbReference type="KEGG" id="nmc:NMC1029"/>
<dbReference type="HOGENOM" id="CLU_114342_3_0_4"/>
<dbReference type="Proteomes" id="UP000002286">
    <property type="component" value="Chromosome"/>
</dbReference>
<dbReference type="GO" id="GO:0005886">
    <property type="term" value="C:plasma membrane"/>
    <property type="evidence" value="ECO:0007669"/>
    <property type="project" value="UniProtKB-SubCell"/>
</dbReference>
<dbReference type="GO" id="GO:0062054">
    <property type="term" value="F:fluoride channel activity"/>
    <property type="evidence" value="ECO:0007669"/>
    <property type="project" value="UniProtKB-UniRule"/>
</dbReference>
<dbReference type="GO" id="GO:0046872">
    <property type="term" value="F:metal ion binding"/>
    <property type="evidence" value="ECO:0007669"/>
    <property type="project" value="UniProtKB-KW"/>
</dbReference>
<dbReference type="GO" id="GO:0140114">
    <property type="term" value="P:cellular detoxification of fluoride"/>
    <property type="evidence" value="ECO:0007669"/>
    <property type="project" value="UniProtKB-UniRule"/>
</dbReference>
<dbReference type="HAMAP" id="MF_00454">
    <property type="entry name" value="FluC"/>
    <property type="match status" value="1"/>
</dbReference>
<dbReference type="InterPro" id="IPR003691">
    <property type="entry name" value="FluC"/>
</dbReference>
<dbReference type="NCBIfam" id="NF010826">
    <property type="entry name" value="PRK14230.1"/>
    <property type="match status" value="1"/>
</dbReference>
<dbReference type="PANTHER" id="PTHR28259">
    <property type="entry name" value="FLUORIDE EXPORT PROTEIN 1-RELATED"/>
    <property type="match status" value="1"/>
</dbReference>
<dbReference type="PANTHER" id="PTHR28259:SF1">
    <property type="entry name" value="FLUORIDE EXPORT PROTEIN 1-RELATED"/>
    <property type="match status" value="1"/>
</dbReference>
<dbReference type="Pfam" id="PF02537">
    <property type="entry name" value="CRCB"/>
    <property type="match status" value="1"/>
</dbReference>
<reference key="1">
    <citation type="journal article" date="2007" name="PLoS Genet.">
        <title>Meningococcal genetic variation mechanisms viewed through comparative analysis of serogroup C strain FAM18.</title>
        <authorList>
            <person name="Bentley S.D."/>
            <person name="Vernikos G.S."/>
            <person name="Snyder L.A.S."/>
            <person name="Churcher C."/>
            <person name="Arrowsmith C."/>
            <person name="Chillingworth T."/>
            <person name="Cronin A."/>
            <person name="Davis P.H."/>
            <person name="Holroyd N.E."/>
            <person name="Jagels K."/>
            <person name="Maddison M."/>
            <person name="Moule S."/>
            <person name="Rabbinowitsch E."/>
            <person name="Sharp S."/>
            <person name="Unwin L."/>
            <person name="Whitehead S."/>
            <person name="Quail M.A."/>
            <person name="Achtman M."/>
            <person name="Barrell B.G."/>
            <person name="Saunders N.J."/>
            <person name="Parkhill J."/>
        </authorList>
    </citation>
    <scope>NUCLEOTIDE SEQUENCE [LARGE SCALE GENOMIC DNA]</scope>
    <source>
        <strain>ATCC 700532 / DSM 15464 / FAM18</strain>
    </source>
</reference>
<accession>A1KTV1</accession>
<proteinExistence type="inferred from homology"/>